<gene>
    <name evidence="1" type="primary">aaeX</name>
    <name type="synonym">yhcR</name>
    <name type="ordered locus">b3242</name>
    <name type="ordered locus">JW5541</name>
</gene>
<keyword id="KW-1003">Cell membrane</keyword>
<keyword id="KW-0472">Membrane</keyword>
<keyword id="KW-1185">Reference proteome</keyword>
<keyword id="KW-0812">Transmembrane</keyword>
<keyword id="KW-1133">Transmembrane helix</keyword>
<dbReference type="EMBL" id="U18997">
    <property type="protein sequence ID" value="AAA58044.1"/>
    <property type="status" value="ALT_INIT"/>
    <property type="molecule type" value="Genomic_DNA"/>
</dbReference>
<dbReference type="EMBL" id="U00096">
    <property type="protein sequence ID" value="AAC76274.2"/>
    <property type="molecule type" value="Genomic_DNA"/>
</dbReference>
<dbReference type="EMBL" id="AP009048">
    <property type="protein sequence ID" value="BAE77285.1"/>
    <property type="molecule type" value="Genomic_DNA"/>
</dbReference>
<dbReference type="PIR" id="D65116">
    <property type="entry name" value="D65116"/>
</dbReference>
<dbReference type="RefSeq" id="NP_417709.2">
    <property type="nucleotide sequence ID" value="NC_000913.3"/>
</dbReference>
<dbReference type="RefSeq" id="WP_000051841.1">
    <property type="nucleotide sequence ID" value="NZ_STEB01000012.1"/>
</dbReference>
<dbReference type="BioGRID" id="4262440">
    <property type="interactions" value="13"/>
</dbReference>
<dbReference type="FunCoup" id="P46478">
    <property type="interactions" value="61"/>
</dbReference>
<dbReference type="STRING" id="511145.b3242"/>
<dbReference type="PaxDb" id="511145-b3242"/>
<dbReference type="EnsemblBacteria" id="AAC76274">
    <property type="protein sequence ID" value="AAC76274"/>
    <property type="gene ID" value="b3242"/>
</dbReference>
<dbReference type="GeneID" id="93778743"/>
<dbReference type="GeneID" id="947751"/>
<dbReference type="KEGG" id="ecj:JW5541"/>
<dbReference type="KEGG" id="eco:b3242"/>
<dbReference type="KEGG" id="ecoc:C3026_17635"/>
<dbReference type="PATRIC" id="fig|1411691.4.peg.3486"/>
<dbReference type="EchoBASE" id="EB2675"/>
<dbReference type="eggNOG" id="ENOG5032YJX">
    <property type="taxonomic scope" value="Bacteria"/>
</dbReference>
<dbReference type="HOGENOM" id="CLU_188292_0_0_6"/>
<dbReference type="InParanoid" id="P46478"/>
<dbReference type="OMA" id="IYDLVWH"/>
<dbReference type="OrthoDB" id="6080293at2"/>
<dbReference type="PhylomeDB" id="P46478"/>
<dbReference type="BioCyc" id="EcoCyc:G7687-MONOMER"/>
<dbReference type="PRO" id="PR:P46478"/>
<dbReference type="Proteomes" id="UP000000625">
    <property type="component" value="Chromosome"/>
</dbReference>
<dbReference type="GO" id="GO:0005886">
    <property type="term" value="C:plasma membrane"/>
    <property type="evidence" value="ECO:0007669"/>
    <property type="project" value="UniProtKB-SubCell"/>
</dbReference>
<dbReference type="HAMAP" id="MF_01546">
    <property type="entry name" value="AaeX"/>
    <property type="match status" value="1"/>
</dbReference>
<dbReference type="InterPro" id="IPR012451">
    <property type="entry name" value="DUF1656"/>
</dbReference>
<dbReference type="NCBIfam" id="NF008615">
    <property type="entry name" value="PRK11594.1"/>
    <property type="match status" value="1"/>
</dbReference>
<dbReference type="Pfam" id="PF07869">
    <property type="entry name" value="DUF1656"/>
    <property type="match status" value="1"/>
</dbReference>
<reference key="1">
    <citation type="journal article" date="1997" name="Science">
        <title>The complete genome sequence of Escherichia coli K-12.</title>
        <authorList>
            <person name="Blattner F.R."/>
            <person name="Plunkett G. III"/>
            <person name="Bloch C.A."/>
            <person name="Perna N.T."/>
            <person name="Burland V."/>
            <person name="Riley M."/>
            <person name="Collado-Vides J."/>
            <person name="Glasner J.D."/>
            <person name="Rode C.K."/>
            <person name="Mayhew G.F."/>
            <person name="Gregor J."/>
            <person name="Davis N.W."/>
            <person name="Kirkpatrick H.A."/>
            <person name="Goeden M.A."/>
            <person name="Rose D.J."/>
            <person name="Mau B."/>
            <person name="Shao Y."/>
        </authorList>
    </citation>
    <scope>NUCLEOTIDE SEQUENCE [LARGE SCALE GENOMIC DNA]</scope>
    <source>
        <strain>K12 / MG1655 / ATCC 47076</strain>
    </source>
</reference>
<reference key="2">
    <citation type="journal article" date="2006" name="Mol. Syst. Biol.">
        <title>Highly accurate genome sequences of Escherichia coli K-12 strains MG1655 and W3110.</title>
        <authorList>
            <person name="Hayashi K."/>
            <person name="Morooka N."/>
            <person name="Yamamoto Y."/>
            <person name="Fujita K."/>
            <person name="Isono K."/>
            <person name="Choi S."/>
            <person name="Ohtsubo E."/>
            <person name="Baba T."/>
            <person name="Wanner B.L."/>
            <person name="Mori H."/>
            <person name="Horiuchi T."/>
        </authorList>
    </citation>
    <scope>NUCLEOTIDE SEQUENCE [LARGE SCALE GENOMIC DNA]</scope>
    <source>
        <strain>K12 / W3110 / ATCC 27325 / DSM 5911</strain>
    </source>
</reference>
<reference key="3">
    <citation type="journal article" date="2004" name="J. Bacteriol.">
        <title>Characterization of the Escherichia coli AaeAB efflux pump: a metabolic relief valve?</title>
        <authorList>
            <person name="Van Dyk T.K."/>
            <person name="Templeton L.J."/>
            <person name="Cantera K.A."/>
            <person name="Sharpe P.L."/>
            <person name="Sariaslani F.S."/>
        </authorList>
    </citation>
    <scope>INDUCTION</scope>
    <source>
        <strain>K12 / MG1655 / ATCC 47076</strain>
    </source>
</reference>
<name>AAEX_ECOLI</name>
<accession>P46478</accession>
<accession>Q2M8X1</accession>
<organism>
    <name type="scientific">Escherichia coli (strain K12)</name>
    <dbReference type="NCBI Taxonomy" id="83333"/>
    <lineage>
        <taxon>Bacteria</taxon>
        <taxon>Pseudomonadati</taxon>
        <taxon>Pseudomonadota</taxon>
        <taxon>Gammaproteobacteria</taxon>
        <taxon>Enterobacterales</taxon>
        <taxon>Enterobacteriaceae</taxon>
        <taxon>Escherichia</taxon>
    </lineage>
</organism>
<comment type="subcellular location">
    <subcellularLocation>
        <location evidence="1">Cell membrane</location>
        <topology evidence="1">Multi-pass membrane protein</topology>
    </subcellularLocation>
</comment>
<comment type="induction">
    <text evidence="1 2">Positively coregulated with aaeA and aaeB by AaeR.</text>
</comment>
<comment type="similarity">
    <text evidence="1">Belongs to the AaeX family.</text>
</comment>
<comment type="sequence caution" evidence="3">
    <conflict type="erroneous initiation">
        <sequence resource="EMBL-CDS" id="AAA58044"/>
    </conflict>
    <text>Extended N-terminus.</text>
</comment>
<proteinExistence type="evidence at transcript level"/>
<sequence length="67" mass="7847">MSLFPVIVVFGLSFPPIFFELLLSLAIFWLVRRVLVPTGIYDFVWHPALFNTALYCCLFYLISRLFV</sequence>
<protein>
    <recommendedName>
        <fullName evidence="1">Protein AaeX</fullName>
    </recommendedName>
</protein>
<feature type="chain" id="PRO_0000215048" description="Protein AaeX">
    <location>
        <begin position="1"/>
        <end position="67"/>
    </location>
</feature>
<feature type="transmembrane region" description="Helical" evidence="1">
    <location>
        <begin position="3"/>
        <end position="23"/>
    </location>
</feature>
<feature type="transmembrane region" description="Helical" evidence="1">
    <location>
        <begin position="43"/>
        <end position="63"/>
    </location>
</feature>
<evidence type="ECO:0000255" key="1">
    <source>
        <dbReference type="HAMAP-Rule" id="MF_01546"/>
    </source>
</evidence>
<evidence type="ECO:0000269" key="2">
    <source>
    </source>
</evidence>
<evidence type="ECO:0000305" key="3"/>